<name>PRKRA_DANRE</name>
<sequence>MAPQRSQDKTPIQLLHEYGIKISSAPKYELIHADGDAHQPSFMFSVTIGEVTCKGRGSTKKAAKHEAAEAALKLLKRDSQIIDQRDNNGLSPEAGEASNPVGILQELAMQRVWCLPEYVVFMETGPGHMKEFTIACRLEGLEETGSGSSKKLARRAAAENMIAKLQSLSGSSEITWSPPSRVYVESLRNSTGEKVSLLKRTPLSLPNTDYIQMLLEISLELGFQVTYIDIDELTVNGQYQCLVELSTRPVTVCHGSGVTSSNAHNAAAHNALQYIKMVASKH</sequence>
<dbReference type="EMBL" id="CU104719">
    <property type="protein sequence ID" value="CAQ15450.1"/>
    <property type="status" value="ALT_INIT"/>
    <property type="molecule type" value="Genomic_DNA"/>
</dbReference>
<dbReference type="EMBL" id="BC135034">
    <property type="protein sequence ID" value="AAI35035.1"/>
    <property type="molecule type" value="mRNA"/>
</dbReference>
<dbReference type="RefSeq" id="NP_001082830.1">
    <property type="nucleotide sequence ID" value="NM_001089361.1"/>
</dbReference>
<dbReference type="SMR" id="B0V3F8"/>
<dbReference type="FunCoup" id="B0V3F8">
    <property type="interactions" value="578"/>
</dbReference>
<dbReference type="STRING" id="7955.ENSDARP00000036697"/>
<dbReference type="PaxDb" id="7955-ENSDARP00000115290"/>
<dbReference type="PeptideAtlas" id="B0V3F8"/>
<dbReference type="Ensembl" id="ENSDART00000036605">
    <property type="protein sequence ID" value="ENSDARP00000036697"/>
    <property type="gene ID" value="ENSDARG00000076718"/>
</dbReference>
<dbReference type="GeneID" id="557370"/>
<dbReference type="KEGG" id="dre:557370"/>
<dbReference type="AGR" id="ZFIN:ZDB-GENE-050309-206"/>
<dbReference type="CTD" id="8575"/>
<dbReference type="ZFIN" id="ZDB-GENE-050309-206">
    <property type="gene designation" value="prkra"/>
</dbReference>
<dbReference type="eggNOG" id="KOG3732">
    <property type="taxonomic scope" value="Eukaryota"/>
</dbReference>
<dbReference type="HOGENOM" id="CLU_048292_0_1_1"/>
<dbReference type="InParanoid" id="B0V3F8"/>
<dbReference type="OrthoDB" id="10056847at2759"/>
<dbReference type="PhylomeDB" id="B0V3F8"/>
<dbReference type="TreeFam" id="TF315953"/>
<dbReference type="Reactome" id="R-DRE-9833482">
    <property type="pathway name" value="PKR-mediated signaling"/>
</dbReference>
<dbReference type="PRO" id="PR:B0V3F8"/>
<dbReference type="Proteomes" id="UP000000437">
    <property type="component" value="Chromosome 9"/>
</dbReference>
<dbReference type="Bgee" id="ENSDARG00000076718">
    <property type="expression patterns" value="Expressed in ovary and 23 other cell types or tissues"/>
</dbReference>
<dbReference type="ExpressionAtlas" id="B0V3F8">
    <property type="expression patterns" value="baseline and differential"/>
</dbReference>
<dbReference type="GO" id="GO:0005737">
    <property type="term" value="C:cytoplasm"/>
    <property type="evidence" value="ECO:0000250"/>
    <property type="project" value="UniProtKB"/>
</dbReference>
<dbReference type="GO" id="GO:0005634">
    <property type="term" value="C:nucleus"/>
    <property type="evidence" value="ECO:0000318"/>
    <property type="project" value="GO_Central"/>
</dbReference>
<dbReference type="GO" id="GO:0048471">
    <property type="term" value="C:perinuclear region of cytoplasm"/>
    <property type="evidence" value="ECO:0007669"/>
    <property type="project" value="UniProtKB-SubCell"/>
</dbReference>
<dbReference type="GO" id="GO:0016442">
    <property type="term" value="C:RISC complex"/>
    <property type="evidence" value="ECO:0000318"/>
    <property type="project" value="GO_Central"/>
</dbReference>
<dbReference type="GO" id="GO:0070578">
    <property type="term" value="C:RISC-loading complex"/>
    <property type="evidence" value="ECO:0000318"/>
    <property type="project" value="GO_Central"/>
</dbReference>
<dbReference type="GO" id="GO:0003725">
    <property type="term" value="F:double-stranded RNA binding"/>
    <property type="evidence" value="ECO:0000318"/>
    <property type="project" value="GO_Central"/>
</dbReference>
<dbReference type="GO" id="GO:0035197">
    <property type="term" value="F:siRNA binding"/>
    <property type="evidence" value="ECO:0000318"/>
    <property type="project" value="GO_Central"/>
</dbReference>
<dbReference type="GO" id="GO:0070920">
    <property type="term" value="P:regulation of regulatory ncRNA processing"/>
    <property type="evidence" value="ECO:0000318"/>
    <property type="project" value="GO_Central"/>
</dbReference>
<dbReference type="GO" id="GO:0030422">
    <property type="term" value="P:siRNA processing"/>
    <property type="evidence" value="ECO:0000250"/>
    <property type="project" value="UniProtKB"/>
</dbReference>
<dbReference type="CDD" id="cd19862">
    <property type="entry name" value="DSRM_PRKRA-like_rpt1"/>
    <property type="match status" value="1"/>
</dbReference>
<dbReference type="CDD" id="cd19863">
    <property type="entry name" value="DSRM_PRKRA-like_rpt2"/>
    <property type="match status" value="1"/>
</dbReference>
<dbReference type="FunFam" id="3.30.160.20:FF:000007">
    <property type="entry name" value="Double-stranded RNA-binding protein Staufen homolog 1"/>
    <property type="match status" value="1"/>
</dbReference>
<dbReference type="FunFam" id="3.30.160.20:FF:000005">
    <property type="entry name" value="Putative double-stranded RNA-specific adenosine deaminase"/>
    <property type="match status" value="1"/>
</dbReference>
<dbReference type="Gene3D" id="3.30.160.20">
    <property type="match status" value="3"/>
</dbReference>
<dbReference type="InterPro" id="IPR014720">
    <property type="entry name" value="dsRBD_dom"/>
</dbReference>
<dbReference type="InterPro" id="IPR007110">
    <property type="entry name" value="Ig-like_dom"/>
</dbReference>
<dbReference type="InterPro" id="IPR051247">
    <property type="entry name" value="RLC_Component"/>
</dbReference>
<dbReference type="InterPro" id="IPR032478">
    <property type="entry name" value="Staufen_C"/>
</dbReference>
<dbReference type="PANTHER" id="PTHR46205:SF2">
    <property type="entry name" value="INTERFERON-INDUCIBLE DOUBLE-STRANDED RNA-DEPENDENT PROTEIN KINASE ACTIVATOR A"/>
    <property type="match status" value="1"/>
</dbReference>
<dbReference type="PANTHER" id="PTHR46205">
    <property type="entry name" value="LOQUACIOUS, ISOFORM B"/>
    <property type="match status" value="1"/>
</dbReference>
<dbReference type="Pfam" id="PF00035">
    <property type="entry name" value="dsrm"/>
    <property type="match status" value="2"/>
</dbReference>
<dbReference type="Pfam" id="PF16482">
    <property type="entry name" value="Staufen_C"/>
    <property type="match status" value="1"/>
</dbReference>
<dbReference type="SMART" id="SM00358">
    <property type="entry name" value="DSRM"/>
    <property type="match status" value="3"/>
</dbReference>
<dbReference type="SUPFAM" id="SSF54768">
    <property type="entry name" value="dsRNA-binding domain-like"/>
    <property type="match status" value="3"/>
</dbReference>
<dbReference type="PROSITE" id="PS50137">
    <property type="entry name" value="DS_RBD"/>
    <property type="match status" value="3"/>
</dbReference>
<dbReference type="PROSITE" id="PS50835">
    <property type="entry name" value="IG_LIKE"/>
    <property type="match status" value="1"/>
</dbReference>
<organism>
    <name type="scientific">Danio rerio</name>
    <name type="common">Zebrafish</name>
    <name type="synonym">Brachydanio rerio</name>
    <dbReference type="NCBI Taxonomy" id="7955"/>
    <lineage>
        <taxon>Eukaryota</taxon>
        <taxon>Metazoa</taxon>
        <taxon>Chordata</taxon>
        <taxon>Craniata</taxon>
        <taxon>Vertebrata</taxon>
        <taxon>Euteleostomi</taxon>
        <taxon>Actinopterygii</taxon>
        <taxon>Neopterygii</taxon>
        <taxon>Teleostei</taxon>
        <taxon>Ostariophysi</taxon>
        <taxon>Cypriniformes</taxon>
        <taxon>Danionidae</taxon>
        <taxon>Danioninae</taxon>
        <taxon>Danio</taxon>
    </lineage>
</organism>
<evidence type="ECO:0000250" key="1"/>
<evidence type="ECO:0000255" key="2">
    <source>
        <dbReference type="PROSITE-ProRule" id="PRU00266"/>
    </source>
</evidence>
<evidence type="ECO:0000305" key="3"/>
<accession>B0V3F8</accession>
<accession>A4IGC9</accession>
<feature type="chain" id="PRO_0000379456" description="Interferon-inducible double-stranded RNA-dependent protein kinase activator A homolog">
    <location>
        <begin position="1"/>
        <end position="282"/>
    </location>
</feature>
<feature type="domain" description="DRBM 1" evidence="2">
    <location>
        <begin position="10"/>
        <end position="77"/>
    </location>
</feature>
<feature type="domain" description="DRBM 2" evidence="2">
    <location>
        <begin position="99"/>
        <end position="167"/>
    </location>
</feature>
<feature type="domain" description="DRBM 3" evidence="2">
    <location>
        <begin position="209"/>
        <end position="277"/>
    </location>
</feature>
<feature type="sequence conflict" description="In Ref. 2; AAI35035." evidence="3" ref="2">
    <original>E</original>
    <variation>G</variation>
    <location>
        <position position="93"/>
    </location>
</feature>
<comment type="function">
    <text evidence="1">Activates eif2ak2/pkr in the absence of double-stranded RNA (dsRNA), leading to phosphorylation of eif2s1/efi2-alpha and inhibition of translation and induction of apoptosis. Required for siRNA production by dicer1 and for subsequent siRNA-mediated post-transcriptional gene silencing. Does not seem to be required for processing of pre-miRNA to miRNA by dicer1 (By similarity).</text>
</comment>
<comment type="subunit">
    <text evidence="1">Homodimer. Interacts with dicer1 and eif2ak2/pkr. Also able to interact with dsRNA (By similarity).</text>
</comment>
<comment type="subcellular location">
    <subcellularLocation>
        <location evidence="1">Cytoplasm</location>
        <location evidence="1">Perinuclear region</location>
    </subcellularLocation>
</comment>
<comment type="similarity">
    <text evidence="3">Belongs to the PRKRA family.</text>
</comment>
<comment type="sequence caution" evidence="3">
    <conflict type="erroneous initiation">
        <sequence resource="EMBL-CDS" id="CAQ15450"/>
    </conflict>
</comment>
<keyword id="KW-0963">Cytoplasm</keyword>
<keyword id="KW-1185">Reference proteome</keyword>
<keyword id="KW-0677">Repeat</keyword>
<keyword id="KW-0694">RNA-binding</keyword>
<keyword id="KW-0943">RNA-mediated gene silencing</keyword>
<reference key="1">
    <citation type="journal article" date="2013" name="Nature">
        <title>The zebrafish reference genome sequence and its relationship to the human genome.</title>
        <authorList>
            <person name="Howe K."/>
            <person name="Clark M.D."/>
            <person name="Torroja C.F."/>
            <person name="Torrance J."/>
            <person name="Berthelot C."/>
            <person name="Muffato M."/>
            <person name="Collins J.E."/>
            <person name="Humphray S."/>
            <person name="McLaren K."/>
            <person name="Matthews L."/>
            <person name="McLaren S."/>
            <person name="Sealy I."/>
            <person name="Caccamo M."/>
            <person name="Churcher C."/>
            <person name="Scott C."/>
            <person name="Barrett J.C."/>
            <person name="Koch R."/>
            <person name="Rauch G.J."/>
            <person name="White S."/>
            <person name="Chow W."/>
            <person name="Kilian B."/>
            <person name="Quintais L.T."/>
            <person name="Guerra-Assuncao J.A."/>
            <person name="Zhou Y."/>
            <person name="Gu Y."/>
            <person name="Yen J."/>
            <person name="Vogel J.H."/>
            <person name="Eyre T."/>
            <person name="Redmond S."/>
            <person name="Banerjee R."/>
            <person name="Chi J."/>
            <person name="Fu B."/>
            <person name="Langley E."/>
            <person name="Maguire S.F."/>
            <person name="Laird G.K."/>
            <person name="Lloyd D."/>
            <person name="Kenyon E."/>
            <person name="Donaldson S."/>
            <person name="Sehra H."/>
            <person name="Almeida-King J."/>
            <person name="Loveland J."/>
            <person name="Trevanion S."/>
            <person name="Jones M."/>
            <person name="Quail M."/>
            <person name="Willey D."/>
            <person name="Hunt A."/>
            <person name="Burton J."/>
            <person name="Sims S."/>
            <person name="McLay K."/>
            <person name="Plumb B."/>
            <person name="Davis J."/>
            <person name="Clee C."/>
            <person name="Oliver K."/>
            <person name="Clark R."/>
            <person name="Riddle C."/>
            <person name="Elliot D."/>
            <person name="Threadgold G."/>
            <person name="Harden G."/>
            <person name="Ware D."/>
            <person name="Begum S."/>
            <person name="Mortimore B."/>
            <person name="Kerry G."/>
            <person name="Heath P."/>
            <person name="Phillimore B."/>
            <person name="Tracey A."/>
            <person name="Corby N."/>
            <person name="Dunn M."/>
            <person name="Johnson C."/>
            <person name="Wood J."/>
            <person name="Clark S."/>
            <person name="Pelan S."/>
            <person name="Griffiths G."/>
            <person name="Smith M."/>
            <person name="Glithero R."/>
            <person name="Howden P."/>
            <person name="Barker N."/>
            <person name="Lloyd C."/>
            <person name="Stevens C."/>
            <person name="Harley J."/>
            <person name="Holt K."/>
            <person name="Panagiotidis G."/>
            <person name="Lovell J."/>
            <person name="Beasley H."/>
            <person name="Henderson C."/>
            <person name="Gordon D."/>
            <person name="Auger K."/>
            <person name="Wright D."/>
            <person name="Collins J."/>
            <person name="Raisen C."/>
            <person name="Dyer L."/>
            <person name="Leung K."/>
            <person name="Robertson L."/>
            <person name="Ambridge K."/>
            <person name="Leongamornlert D."/>
            <person name="McGuire S."/>
            <person name="Gilderthorp R."/>
            <person name="Griffiths C."/>
            <person name="Manthravadi D."/>
            <person name="Nichol S."/>
            <person name="Barker G."/>
            <person name="Whitehead S."/>
            <person name="Kay M."/>
            <person name="Brown J."/>
            <person name="Murnane C."/>
            <person name="Gray E."/>
            <person name="Humphries M."/>
            <person name="Sycamore N."/>
            <person name="Barker D."/>
            <person name="Saunders D."/>
            <person name="Wallis J."/>
            <person name="Babbage A."/>
            <person name="Hammond S."/>
            <person name="Mashreghi-Mohammadi M."/>
            <person name="Barr L."/>
            <person name="Martin S."/>
            <person name="Wray P."/>
            <person name="Ellington A."/>
            <person name="Matthews N."/>
            <person name="Ellwood M."/>
            <person name="Woodmansey R."/>
            <person name="Clark G."/>
            <person name="Cooper J."/>
            <person name="Tromans A."/>
            <person name="Grafham D."/>
            <person name="Skuce C."/>
            <person name="Pandian R."/>
            <person name="Andrews R."/>
            <person name="Harrison E."/>
            <person name="Kimberley A."/>
            <person name="Garnett J."/>
            <person name="Fosker N."/>
            <person name="Hall R."/>
            <person name="Garner P."/>
            <person name="Kelly D."/>
            <person name="Bird C."/>
            <person name="Palmer S."/>
            <person name="Gehring I."/>
            <person name="Berger A."/>
            <person name="Dooley C.M."/>
            <person name="Ersan-Urun Z."/>
            <person name="Eser C."/>
            <person name="Geiger H."/>
            <person name="Geisler M."/>
            <person name="Karotki L."/>
            <person name="Kirn A."/>
            <person name="Konantz J."/>
            <person name="Konantz M."/>
            <person name="Oberlander M."/>
            <person name="Rudolph-Geiger S."/>
            <person name="Teucke M."/>
            <person name="Lanz C."/>
            <person name="Raddatz G."/>
            <person name="Osoegawa K."/>
            <person name="Zhu B."/>
            <person name="Rapp A."/>
            <person name="Widaa S."/>
            <person name="Langford C."/>
            <person name="Yang F."/>
            <person name="Schuster S.C."/>
            <person name="Carter N.P."/>
            <person name="Harrow J."/>
            <person name="Ning Z."/>
            <person name="Herrero J."/>
            <person name="Searle S.M."/>
            <person name="Enright A."/>
            <person name="Geisler R."/>
            <person name="Plasterk R.H."/>
            <person name="Lee C."/>
            <person name="Westerfield M."/>
            <person name="de Jong P.J."/>
            <person name="Zon L.I."/>
            <person name="Postlethwait J.H."/>
            <person name="Nusslein-Volhard C."/>
            <person name="Hubbard T.J."/>
            <person name="Roest Crollius H."/>
            <person name="Rogers J."/>
            <person name="Stemple D.L."/>
        </authorList>
    </citation>
    <scope>NUCLEOTIDE SEQUENCE [LARGE SCALE GENOMIC DNA]</scope>
    <source>
        <strain>Tuebingen</strain>
    </source>
</reference>
<reference key="2">
    <citation type="submission" date="2007-03" db="EMBL/GenBank/DDBJ databases">
        <authorList>
            <consortium name="NIH - Zebrafish Gene Collection (ZGC) project"/>
        </authorList>
    </citation>
    <scope>NUCLEOTIDE SEQUENCE [LARGE SCALE MRNA]</scope>
    <source>
        <tissue>Embryo</tissue>
    </source>
</reference>
<protein>
    <recommendedName>
        <fullName>Interferon-inducible double-stranded RNA-dependent protein kinase activator A homolog</fullName>
    </recommendedName>
</protein>
<proteinExistence type="evidence at transcript level"/>
<gene>
    <name type="primary">prkra</name>
    <name type="ORF">si:ch73-57b20.1</name>
    <name type="ORF">zgc:162619</name>
</gene>